<evidence type="ECO:0000255" key="1">
    <source>
        <dbReference type="HAMAP-Rule" id="MF_00172"/>
    </source>
</evidence>
<evidence type="ECO:0000256" key="2">
    <source>
        <dbReference type="SAM" id="MobiDB-lite"/>
    </source>
</evidence>
<name>METE_SALRD</name>
<proteinExistence type="inferred from homology"/>
<reference key="1">
    <citation type="journal article" date="2005" name="Proc. Natl. Acad. Sci. U.S.A.">
        <title>The genome of Salinibacter ruber: convergence and gene exchange among hyperhalophilic bacteria and archaea.</title>
        <authorList>
            <person name="Mongodin E.F."/>
            <person name="Nelson K.E."/>
            <person name="Daugherty S."/>
            <person name="DeBoy R.T."/>
            <person name="Wister J."/>
            <person name="Khouri H."/>
            <person name="Weidman J."/>
            <person name="Walsh D.A."/>
            <person name="Papke R.T."/>
            <person name="Sanchez Perez G."/>
            <person name="Sharma A.K."/>
            <person name="Nesbo C.L."/>
            <person name="MacLeod D."/>
            <person name="Bapteste E."/>
            <person name="Doolittle W.F."/>
            <person name="Charlebois R.L."/>
            <person name="Legault B."/>
            <person name="Rodriguez-Valera F."/>
        </authorList>
    </citation>
    <scope>NUCLEOTIDE SEQUENCE [LARGE SCALE GENOMIC DNA]</scope>
    <source>
        <strain>DSM 13855 / CECT 5946 / M31</strain>
    </source>
</reference>
<protein>
    <recommendedName>
        <fullName evidence="1">5-methyltetrahydropteroyltriglutamate--homocysteine methyltransferase</fullName>
        <ecNumber evidence="1">2.1.1.14</ecNumber>
    </recommendedName>
    <alternativeName>
        <fullName evidence="1">Cobalamin-independent methionine synthase</fullName>
    </alternativeName>
    <alternativeName>
        <fullName evidence="1">Methionine synthase, vitamin-B12 independent isozyme</fullName>
    </alternativeName>
</protein>
<sequence>MATASNLGYPRIGAHRELKRAVEGYWKGDLTKDELRDSAQALRESHWATQQELGLDVVPSNDFSYYDQVLDACAMVGAVPERFPWDGTEVDLDTYFAMARGLQEKDLEGEESGVQAMEMTKWFDTNYHYIVPEFSHDTTFSLSSTKVIDEYEEAKAQGVDTRPVVIGPVSFLLLGKTQADDLDALDLLDDLLPVYAEVLQELADAGCEAVQLDEPNLVLDLSDAERAALDQAYEALADAADIELHVATYFGGLEDNLPTALDLPIDVLHLDLTRGEEQLDEALDHGVPDDLALSLGVIDGRNVWRADLDALLGTVETAIDALGTDRVLVGPSCSLLHVPVDLDTEPGLSDEMKTWFAFATQKIEEIVALAERADGHEDATEALFEKSRRAHAARAESDWINDAAVQDRVAGIDASMTERDSPHSSRSPLQREALDLPTLPTTTIGSFPQTDDMRRMRAQYKKDEISKDEYEDFIEEQIADTIAAQEEIGLDVLVHGEPERGDMVEHFGRQLDGFLFTENGWVQSYGTRCVRPPIIAGDVSRPEPMTTRWLSYANDQTDTPVKGMLTGPVTMLQWSFVRDDQSRAETCRQIALAIRDEVLDLEDVGIQAIQIDEPAFREGLPLREHQWDDYLDWAVECFRLASSGVRDETQIHTHMCYSEFNDIIEAIADMDADVISVEASRSKMELLDSFDAFDYPNEIGPGVYDIHSPRVPSVEEMEELIRTALDALEPSQMWVNPDCGLKTRRWVEVQPSLENMVQAAENVRERATA</sequence>
<comment type="function">
    <text evidence="1">Catalyzes the transfer of a methyl group from 5-methyltetrahydrofolate to homocysteine resulting in methionine formation.</text>
</comment>
<comment type="catalytic activity">
    <reaction evidence="1">
        <text>5-methyltetrahydropteroyltri-L-glutamate + L-homocysteine = tetrahydropteroyltri-L-glutamate + L-methionine</text>
        <dbReference type="Rhea" id="RHEA:21196"/>
        <dbReference type="ChEBI" id="CHEBI:57844"/>
        <dbReference type="ChEBI" id="CHEBI:58140"/>
        <dbReference type="ChEBI" id="CHEBI:58199"/>
        <dbReference type="ChEBI" id="CHEBI:58207"/>
        <dbReference type="EC" id="2.1.1.14"/>
    </reaction>
</comment>
<comment type="cofactor">
    <cofactor evidence="1">
        <name>Zn(2+)</name>
        <dbReference type="ChEBI" id="CHEBI:29105"/>
    </cofactor>
    <text evidence="1">Binds 1 zinc ion per subunit.</text>
</comment>
<comment type="pathway">
    <text evidence="1">Amino-acid biosynthesis; L-methionine biosynthesis via de novo pathway; L-methionine from L-homocysteine (MetE route): step 1/1.</text>
</comment>
<comment type="similarity">
    <text evidence="1">Belongs to the vitamin-B12 independent methionine synthase family.</text>
</comment>
<dbReference type="EC" id="2.1.1.14" evidence="1"/>
<dbReference type="EMBL" id="CP000159">
    <property type="protein sequence ID" value="ABC44655.1"/>
    <property type="molecule type" value="Genomic_DNA"/>
</dbReference>
<dbReference type="RefSeq" id="WP_011404021.1">
    <property type="nucleotide sequence ID" value="NC_007677.1"/>
</dbReference>
<dbReference type="RefSeq" id="YP_445393.1">
    <property type="nucleotide sequence ID" value="NC_007677.1"/>
</dbReference>
<dbReference type="SMR" id="Q2S338"/>
<dbReference type="STRING" id="309807.SRU_1269"/>
<dbReference type="EnsemblBacteria" id="ABC44655">
    <property type="protein sequence ID" value="ABC44655"/>
    <property type="gene ID" value="SRU_1269"/>
</dbReference>
<dbReference type="GeneID" id="83728181"/>
<dbReference type="KEGG" id="sru:SRU_1269"/>
<dbReference type="PATRIC" id="fig|309807.25.peg.1317"/>
<dbReference type="eggNOG" id="COG0620">
    <property type="taxonomic scope" value="Bacteria"/>
</dbReference>
<dbReference type="HOGENOM" id="CLU_013175_0_0_10"/>
<dbReference type="OrthoDB" id="244285at2"/>
<dbReference type="UniPathway" id="UPA00051">
    <property type="reaction ID" value="UER00082"/>
</dbReference>
<dbReference type="Proteomes" id="UP000008674">
    <property type="component" value="Chromosome"/>
</dbReference>
<dbReference type="GO" id="GO:0003871">
    <property type="term" value="F:5-methyltetrahydropteroyltriglutamate-homocysteine S-methyltransferase activity"/>
    <property type="evidence" value="ECO:0007669"/>
    <property type="project" value="UniProtKB-UniRule"/>
</dbReference>
<dbReference type="GO" id="GO:0008270">
    <property type="term" value="F:zinc ion binding"/>
    <property type="evidence" value="ECO:0007669"/>
    <property type="project" value="InterPro"/>
</dbReference>
<dbReference type="GO" id="GO:0009086">
    <property type="term" value="P:methionine biosynthetic process"/>
    <property type="evidence" value="ECO:0007669"/>
    <property type="project" value="UniProtKB-UniRule"/>
</dbReference>
<dbReference type="GO" id="GO:0032259">
    <property type="term" value="P:methylation"/>
    <property type="evidence" value="ECO:0007669"/>
    <property type="project" value="UniProtKB-KW"/>
</dbReference>
<dbReference type="CDD" id="cd03311">
    <property type="entry name" value="CIMS_C_terminal_like"/>
    <property type="match status" value="1"/>
</dbReference>
<dbReference type="CDD" id="cd03312">
    <property type="entry name" value="CIMS_N_terminal_like"/>
    <property type="match status" value="1"/>
</dbReference>
<dbReference type="FunFam" id="3.20.20.210:FF:000002">
    <property type="entry name" value="5-methyltetrahydropteroyltriglutamate--homocysteine methyltransferase"/>
    <property type="match status" value="1"/>
</dbReference>
<dbReference type="FunFam" id="3.20.20.210:FF:000003">
    <property type="entry name" value="5-methyltetrahydropteroyltriglutamate--homocysteine methyltransferase"/>
    <property type="match status" value="1"/>
</dbReference>
<dbReference type="Gene3D" id="3.20.20.210">
    <property type="match status" value="2"/>
</dbReference>
<dbReference type="HAMAP" id="MF_00172">
    <property type="entry name" value="Meth_synth"/>
    <property type="match status" value="1"/>
</dbReference>
<dbReference type="InterPro" id="IPR013215">
    <property type="entry name" value="Cbl-indep_Met_Synth_N"/>
</dbReference>
<dbReference type="InterPro" id="IPR006276">
    <property type="entry name" value="Cobalamin-indep_Met_synthase"/>
</dbReference>
<dbReference type="InterPro" id="IPR002629">
    <property type="entry name" value="Met_Synth_C/arc"/>
</dbReference>
<dbReference type="InterPro" id="IPR038071">
    <property type="entry name" value="UROD/MetE-like_sf"/>
</dbReference>
<dbReference type="NCBIfam" id="TIGR01371">
    <property type="entry name" value="met_syn_B12ind"/>
    <property type="match status" value="1"/>
</dbReference>
<dbReference type="NCBIfam" id="NF003556">
    <property type="entry name" value="PRK05222.1"/>
    <property type="match status" value="1"/>
</dbReference>
<dbReference type="PANTHER" id="PTHR30519">
    <property type="entry name" value="5-METHYLTETRAHYDROPTEROYLTRIGLUTAMATE--HOMOCYSTEINE METHYLTRANSFERASE"/>
    <property type="match status" value="1"/>
</dbReference>
<dbReference type="Pfam" id="PF08267">
    <property type="entry name" value="Meth_synt_1"/>
    <property type="match status" value="1"/>
</dbReference>
<dbReference type="Pfam" id="PF01717">
    <property type="entry name" value="Meth_synt_2"/>
    <property type="match status" value="1"/>
</dbReference>
<dbReference type="PIRSF" id="PIRSF000382">
    <property type="entry name" value="MeTrfase_B12_ind"/>
    <property type="match status" value="1"/>
</dbReference>
<dbReference type="SUPFAM" id="SSF51726">
    <property type="entry name" value="UROD/MetE-like"/>
    <property type="match status" value="2"/>
</dbReference>
<gene>
    <name evidence="1" type="primary">metE</name>
    <name type="ordered locus">SRU_1269</name>
</gene>
<feature type="chain" id="PRO_1000191205" description="5-methyltetrahydropteroyltriglutamate--homocysteine methyltransferase">
    <location>
        <begin position="1"/>
        <end position="769"/>
    </location>
</feature>
<feature type="region of interest" description="Disordered" evidence="2">
    <location>
        <begin position="415"/>
        <end position="450"/>
    </location>
</feature>
<feature type="compositionally biased region" description="Polar residues" evidence="2">
    <location>
        <begin position="439"/>
        <end position="449"/>
    </location>
</feature>
<feature type="active site" description="Proton donor" evidence="1">
    <location>
        <position position="707"/>
    </location>
</feature>
<feature type="binding site" evidence="1">
    <location>
        <begin position="16"/>
        <end position="19"/>
    </location>
    <ligand>
        <name>5-methyltetrahydropteroyltri-L-glutamate</name>
        <dbReference type="ChEBI" id="CHEBI:58207"/>
    </ligand>
</feature>
<feature type="binding site" evidence="1">
    <location>
        <position position="121"/>
    </location>
    <ligand>
        <name>5-methyltetrahydropteroyltri-L-glutamate</name>
        <dbReference type="ChEBI" id="CHEBI:58207"/>
    </ligand>
</feature>
<feature type="binding site" evidence="1">
    <location>
        <begin position="444"/>
        <end position="446"/>
    </location>
    <ligand>
        <name>L-homocysteine</name>
        <dbReference type="ChEBI" id="CHEBI:58199"/>
    </ligand>
</feature>
<feature type="binding site" evidence="1">
    <location>
        <begin position="444"/>
        <end position="446"/>
    </location>
    <ligand>
        <name>L-methionine</name>
        <dbReference type="ChEBI" id="CHEBI:57844"/>
    </ligand>
</feature>
<feature type="binding site" evidence="1">
    <location>
        <position position="497"/>
    </location>
    <ligand>
        <name>L-homocysteine</name>
        <dbReference type="ChEBI" id="CHEBI:58199"/>
    </ligand>
</feature>
<feature type="binding site" evidence="1">
    <location>
        <position position="497"/>
    </location>
    <ligand>
        <name>L-methionine</name>
        <dbReference type="ChEBI" id="CHEBI:57844"/>
    </ligand>
</feature>
<feature type="binding site" evidence="1">
    <location>
        <begin position="528"/>
        <end position="529"/>
    </location>
    <ligand>
        <name>5-methyltetrahydropteroyltri-L-glutamate</name>
        <dbReference type="ChEBI" id="CHEBI:58207"/>
    </ligand>
</feature>
<feature type="binding site" evidence="1">
    <location>
        <position position="574"/>
    </location>
    <ligand>
        <name>5-methyltetrahydropteroyltri-L-glutamate</name>
        <dbReference type="ChEBI" id="CHEBI:58207"/>
    </ligand>
</feature>
<feature type="binding site" evidence="1">
    <location>
        <position position="612"/>
    </location>
    <ligand>
        <name>L-homocysteine</name>
        <dbReference type="ChEBI" id="CHEBI:58199"/>
    </ligand>
</feature>
<feature type="binding site" evidence="1">
    <location>
        <position position="612"/>
    </location>
    <ligand>
        <name>L-methionine</name>
        <dbReference type="ChEBI" id="CHEBI:57844"/>
    </ligand>
</feature>
<feature type="binding site" evidence="1">
    <location>
        <position position="618"/>
    </location>
    <ligand>
        <name>5-methyltetrahydropteroyltri-L-glutamate</name>
        <dbReference type="ChEBI" id="CHEBI:58207"/>
    </ligand>
</feature>
<feature type="binding site" evidence="1">
    <location>
        <position position="654"/>
    </location>
    <ligand>
        <name>Zn(2+)</name>
        <dbReference type="ChEBI" id="CHEBI:29105"/>
        <note>catalytic</note>
    </ligand>
</feature>
<feature type="binding site" evidence="1">
    <location>
        <position position="656"/>
    </location>
    <ligand>
        <name>Zn(2+)</name>
        <dbReference type="ChEBI" id="CHEBI:29105"/>
        <note>catalytic</note>
    </ligand>
</feature>
<feature type="binding site" evidence="1">
    <location>
        <position position="678"/>
    </location>
    <ligand>
        <name>Zn(2+)</name>
        <dbReference type="ChEBI" id="CHEBI:29105"/>
        <note>catalytic</note>
    </ligand>
</feature>
<feature type="binding site" evidence="1">
    <location>
        <position position="739"/>
    </location>
    <ligand>
        <name>Zn(2+)</name>
        <dbReference type="ChEBI" id="CHEBI:29105"/>
        <note>catalytic</note>
    </ligand>
</feature>
<accession>Q2S338</accession>
<organism>
    <name type="scientific">Salinibacter ruber (strain DSM 13855 / M31)</name>
    <dbReference type="NCBI Taxonomy" id="309807"/>
    <lineage>
        <taxon>Bacteria</taxon>
        <taxon>Pseudomonadati</taxon>
        <taxon>Rhodothermota</taxon>
        <taxon>Rhodothermia</taxon>
        <taxon>Rhodothermales</taxon>
        <taxon>Salinibacteraceae</taxon>
        <taxon>Salinibacter</taxon>
    </lineage>
</organism>
<keyword id="KW-0028">Amino-acid biosynthesis</keyword>
<keyword id="KW-0479">Metal-binding</keyword>
<keyword id="KW-0486">Methionine biosynthesis</keyword>
<keyword id="KW-0489">Methyltransferase</keyword>
<keyword id="KW-1185">Reference proteome</keyword>
<keyword id="KW-0677">Repeat</keyword>
<keyword id="KW-0808">Transferase</keyword>
<keyword id="KW-0862">Zinc</keyword>